<dbReference type="EC" id="2.5.1.54"/>
<dbReference type="EMBL" id="AL513382">
    <property type="protein sequence ID" value="CAD02005.1"/>
    <property type="molecule type" value="Genomic_DNA"/>
</dbReference>
<dbReference type="EMBL" id="AE014613">
    <property type="protein sequence ID" value="AAO68883.1"/>
    <property type="molecule type" value="Genomic_DNA"/>
</dbReference>
<dbReference type="RefSeq" id="NP_456164.1">
    <property type="nucleotide sequence ID" value="NC_003198.1"/>
</dbReference>
<dbReference type="RefSeq" id="WP_001082192.1">
    <property type="nucleotide sequence ID" value="NZ_WSUR01000011.1"/>
</dbReference>
<dbReference type="SMR" id="Q8Z6I9"/>
<dbReference type="STRING" id="220341.gene:17585697"/>
<dbReference type="KEGG" id="stt:t1228"/>
<dbReference type="KEGG" id="sty:STY1763"/>
<dbReference type="PATRIC" id="fig|220341.7.peg.1775"/>
<dbReference type="eggNOG" id="COG0722">
    <property type="taxonomic scope" value="Bacteria"/>
</dbReference>
<dbReference type="HOGENOM" id="CLU_030903_0_1_6"/>
<dbReference type="OMA" id="PCLSWED"/>
<dbReference type="OrthoDB" id="9807331at2"/>
<dbReference type="UniPathway" id="UPA00053">
    <property type="reaction ID" value="UER00084"/>
</dbReference>
<dbReference type="Proteomes" id="UP000000541">
    <property type="component" value="Chromosome"/>
</dbReference>
<dbReference type="Proteomes" id="UP000002670">
    <property type="component" value="Chromosome"/>
</dbReference>
<dbReference type="GO" id="GO:0005737">
    <property type="term" value="C:cytoplasm"/>
    <property type="evidence" value="ECO:0007669"/>
    <property type="project" value="TreeGrafter"/>
</dbReference>
<dbReference type="GO" id="GO:0003849">
    <property type="term" value="F:3-deoxy-7-phosphoheptulonate synthase activity"/>
    <property type="evidence" value="ECO:0007669"/>
    <property type="project" value="UniProtKB-EC"/>
</dbReference>
<dbReference type="GO" id="GO:0008652">
    <property type="term" value="P:amino acid biosynthetic process"/>
    <property type="evidence" value="ECO:0007669"/>
    <property type="project" value="UniProtKB-KW"/>
</dbReference>
<dbReference type="GO" id="GO:0009073">
    <property type="term" value="P:aromatic amino acid family biosynthetic process"/>
    <property type="evidence" value="ECO:0007669"/>
    <property type="project" value="UniProtKB-KW"/>
</dbReference>
<dbReference type="GO" id="GO:0009423">
    <property type="term" value="P:chorismate biosynthetic process"/>
    <property type="evidence" value="ECO:0007669"/>
    <property type="project" value="UniProtKB-UniPathway"/>
</dbReference>
<dbReference type="FunFam" id="3.20.20.70:FF:000005">
    <property type="entry name" value="Phospho-2-dehydro-3-deoxyheptonate aldolase"/>
    <property type="match status" value="1"/>
</dbReference>
<dbReference type="Gene3D" id="3.20.20.70">
    <property type="entry name" value="Aldolase class I"/>
    <property type="match status" value="1"/>
</dbReference>
<dbReference type="InterPro" id="IPR013785">
    <property type="entry name" value="Aldolase_TIM"/>
</dbReference>
<dbReference type="InterPro" id="IPR006218">
    <property type="entry name" value="DAHP1/KDSA"/>
</dbReference>
<dbReference type="InterPro" id="IPR006219">
    <property type="entry name" value="DAHP_synth_1"/>
</dbReference>
<dbReference type="NCBIfam" id="TIGR00034">
    <property type="entry name" value="aroFGH"/>
    <property type="match status" value="1"/>
</dbReference>
<dbReference type="NCBIfam" id="NF009395">
    <property type="entry name" value="PRK12755.1"/>
    <property type="match status" value="1"/>
</dbReference>
<dbReference type="NCBIfam" id="NF009396">
    <property type="entry name" value="PRK12756.1"/>
    <property type="match status" value="1"/>
</dbReference>
<dbReference type="PANTHER" id="PTHR21225">
    <property type="entry name" value="PHOSPHO-2-DEHYDRO-3-DEOXYHEPTONATE ALDOLASE DAHP SYNTHETASE"/>
    <property type="match status" value="1"/>
</dbReference>
<dbReference type="PANTHER" id="PTHR21225:SF6">
    <property type="entry name" value="PHOSPHO-2-DEHYDRO-3-DEOXYHEPTONATE ALDOLASE, TRP-SENSITIVE"/>
    <property type="match status" value="1"/>
</dbReference>
<dbReference type="Pfam" id="PF00793">
    <property type="entry name" value="DAHP_synth_1"/>
    <property type="match status" value="1"/>
</dbReference>
<dbReference type="PIRSF" id="PIRSF001361">
    <property type="entry name" value="DAHP_synthase"/>
    <property type="match status" value="1"/>
</dbReference>
<dbReference type="SUPFAM" id="SSF51569">
    <property type="entry name" value="Aldolase"/>
    <property type="match status" value="1"/>
</dbReference>
<proteinExistence type="inferred from homology"/>
<protein>
    <recommendedName>
        <fullName>Phospho-2-dehydro-3-deoxyheptonate aldolase, Trp-sensitive</fullName>
        <ecNumber>2.5.1.54</ecNumber>
    </recommendedName>
    <alternativeName>
        <fullName>3-deoxy-D-arabino-heptulosonate 7-phosphate synthase</fullName>
    </alternativeName>
    <alternativeName>
        <fullName>DAHP synthase</fullName>
    </alternativeName>
    <alternativeName>
        <fullName>Phospho-2-keto-3-deoxyheptonate aldolase</fullName>
    </alternativeName>
</protein>
<reference key="1">
    <citation type="journal article" date="2001" name="Nature">
        <title>Complete genome sequence of a multiple drug resistant Salmonella enterica serovar Typhi CT18.</title>
        <authorList>
            <person name="Parkhill J."/>
            <person name="Dougan G."/>
            <person name="James K.D."/>
            <person name="Thomson N.R."/>
            <person name="Pickard D."/>
            <person name="Wain J."/>
            <person name="Churcher C.M."/>
            <person name="Mungall K.L."/>
            <person name="Bentley S.D."/>
            <person name="Holden M.T.G."/>
            <person name="Sebaihia M."/>
            <person name="Baker S."/>
            <person name="Basham D."/>
            <person name="Brooks K."/>
            <person name="Chillingworth T."/>
            <person name="Connerton P."/>
            <person name="Cronin A."/>
            <person name="Davis P."/>
            <person name="Davies R.M."/>
            <person name="Dowd L."/>
            <person name="White N."/>
            <person name="Farrar J."/>
            <person name="Feltwell T."/>
            <person name="Hamlin N."/>
            <person name="Haque A."/>
            <person name="Hien T.T."/>
            <person name="Holroyd S."/>
            <person name="Jagels K."/>
            <person name="Krogh A."/>
            <person name="Larsen T.S."/>
            <person name="Leather S."/>
            <person name="Moule S."/>
            <person name="O'Gaora P."/>
            <person name="Parry C."/>
            <person name="Quail M.A."/>
            <person name="Rutherford K.M."/>
            <person name="Simmonds M."/>
            <person name="Skelton J."/>
            <person name="Stevens K."/>
            <person name="Whitehead S."/>
            <person name="Barrell B.G."/>
        </authorList>
    </citation>
    <scope>NUCLEOTIDE SEQUENCE [LARGE SCALE GENOMIC DNA]</scope>
    <source>
        <strain>CT18</strain>
    </source>
</reference>
<reference key="2">
    <citation type="journal article" date="2003" name="J. Bacteriol.">
        <title>Comparative genomics of Salmonella enterica serovar Typhi strains Ty2 and CT18.</title>
        <authorList>
            <person name="Deng W."/>
            <person name="Liou S.-R."/>
            <person name="Plunkett G. III"/>
            <person name="Mayhew G.F."/>
            <person name="Rose D.J."/>
            <person name="Burland V."/>
            <person name="Kodoyianni V."/>
            <person name="Schwartz D.C."/>
            <person name="Blattner F.R."/>
        </authorList>
    </citation>
    <scope>NUCLEOTIDE SEQUENCE [LARGE SCALE GENOMIC DNA]</scope>
    <source>
        <strain>ATCC 700931 / Ty2</strain>
    </source>
</reference>
<accession>Q8Z6I9</accession>
<name>AROH_SALTI</name>
<comment type="function">
    <text evidence="1">Stereospecific condensation of phosphoenolpyruvate (PEP) and D-erythrose-4-phosphate (E4P) giving rise to 3-deoxy-D-arabino-heptulosonate-7-phosphate (DAHP).</text>
</comment>
<comment type="catalytic activity">
    <reaction>
        <text>D-erythrose 4-phosphate + phosphoenolpyruvate + H2O = 7-phospho-2-dehydro-3-deoxy-D-arabino-heptonate + phosphate</text>
        <dbReference type="Rhea" id="RHEA:14717"/>
        <dbReference type="ChEBI" id="CHEBI:15377"/>
        <dbReference type="ChEBI" id="CHEBI:16897"/>
        <dbReference type="ChEBI" id="CHEBI:43474"/>
        <dbReference type="ChEBI" id="CHEBI:58394"/>
        <dbReference type="ChEBI" id="CHEBI:58702"/>
        <dbReference type="EC" id="2.5.1.54"/>
    </reaction>
</comment>
<comment type="pathway">
    <text>Metabolic intermediate biosynthesis; chorismate biosynthesis; chorismate from D-erythrose 4-phosphate and phosphoenolpyruvate: step 1/7.</text>
</comment>
<comment type="similarity">
    <text evidence="2">Belongs to the class-I DAHP synthase family.</text>
</comment>
<evidence type="ECO:0000250" key="1"/>
<evidence type="ECO:0000305" key="2"/>
<gene>
    <name type="primary">aroH</name>
    <name type="ordered locus">STY1763</name>
    <name type="ordered locus">t1228</name>
</gene>
<feature type="chain" id="PRO_0000140844" description="Phospho-2-dehydro-3-deoxyheptonate aldolase, Trp-sensitive">
    <location>
        <begin position="1"/>
        <end position="348"/>
    </location>
</feature>
<organism>
    <name type="scientific">Salmonella typhi</name>
    <dbReference type="NCBI Taxonomy" id="90370"/>
    <lineage>
        <taxon>Bacteria</taxon>
        <taxon>Pseudomonadati</taxon>
        <taxon>Pseudomonadota</taxon>
        <taxon>Gammaproteobacteria</taxon>
        <taxon>Enterobacterales</taxon>
        <taxon>Enterobacteriaceae</taxon>
        <taxon>Salmonella</taxon>
    </lineage>
</organism>
<keyword id="KW-0028">Amino-acid biosynthesis</keyword>
<keyword id="KW-0057">Aromatic amino acid biosynthesis</keyword>
<keyword id="KW-0808">Transferase</keyword>
<sequence>MNRTDELRTARIDSLVTPTELAQRYPVSSSVASHVTDSRRRIEKILNGEDPRLLVVIGPCSIHDLNAAMEYATQLQAQRQKHQARLEIVMRTYFEKPRTVVGWKGLISDPDLNGSYRVNHGLELARRLLLQVNELGVPTATEFLDMVTGQFIADLISWGTIGARTTESQIHREMASALSCPVGFKNGTDGNTRIAVDAIRASRASHMFLSPDKDGQMTIYQTSGNPYGHIIMRGGKKPNYHAEDIAAACDTLHEFDLPEHLVVDFSHGNCQKQHRRQLDVCDDICQQIRNGSTAIAGIMAESFLREGTQKIISGQPLIYGQSITDPCLNWEDTEVLLEKLAAAVDSRF</sequence>